<organism>
    <name type="scientific">Bacillus subtilis (strain 168)</name>
    <dbReference type="NCBI Taxonomy" id="224308"/>
    <lineage>
        <taxon>Bacteria</taxon>
        <taxon>Bacillati</taxon>
        <taxon>Bacillota</taxon>
        <taxon>Bacilli</taxon>
        <taxon>Bacillales</taxon>
        <taxon>Bacillaceae</taxon>
        <taxon>Bacillus</taxon>
    </lineage>
</organism>
<proteinExistence type="inferred from homology"/>
<reference key="1">
    <citation type="journal article" date="1996" name="Microbiology">
        <title>Systematic sequencing of the 283 kb 210 degrees-232 degrees region of the Bacillus subtilis genome containing the skin element and many sporulation genes.</title>
        <authorList>
            <person name="Mizuno M."/>
            <person name="Masuda S."/>
            <person name="Takemaru K."/>
            <person name="Hosono S."/>
            <person name="Sato T."/>
            <person name="Takeuchi M."/>
            <person name="Kobayashi Y."/>
        </authorList>
    </citation>
    <scope>NUCLEOTIDE SEQUENCE [GENOMIC DNA]</scope>
    <source>
        <strain>168 / JH642</strain>
    </source>
</reference>
<reference key="2">
    <citation type="journal article" date="1997" name="Nature">
        <title>The complete genome sequence of the Gram-positive bacterium Bacillus subtilis.</title>
        <authorList>
            <person name="Kunst F."/>
            <person name="Ogasawara N."/>
            <person name="Moszer I."/>
            <person name="Albertini A.M."/>
            <person name="Alloni G."/>
            <person name="Azevedo V."/>
            <person name="Bertero M.G."/>
            <person name="Bessieres P."/>
            <person name="Bolotin A."/>
            <person name="Borchert S."/>
            <person name="Borriss R."/>
            <person name="Boursier L."/>
            <person name="Brans A."/>
            <person name="Braun M."/>
            <person name="Brignell S.C."/>
            <person name="Bron S."/>
            <person name="Brouillet S."/>
            <person name="Bruschi C.V."/>
            <person name="Caldwell B."/>
            <person name="Capuano V."/>
            <person name="Carter N.M."/>
            <person name="Choi S.-K."/>
            <person name="Codani J.-J."/>
            <person name="Connerton I.F."/>
            <person name="Cummings N.J."/>
            <person name="Daniel R.A."/>
            <person name="Denizot F."/>
            <person name="Devine K.M."/>
            <person name="Duesterhoeft A."/>
            <person name="Ehrlich S.D."/>
            <person name="Emmerson P.T."/>
            <person name="Entian K.-D."/>
            <person name="Errington J."/>
            <person name="Fabret C."/>
            <person name="Ferrari E."/>
            <person name="Foulger D."/>
            <person name="Fritz C."/>
            <person name="Fujita M."/>
            <person name="Fujita Y."/>
            <person name="Fuma S."/>
            <person name="Galizzi A."/>
            <person name="Galleron N."/>
            <person name="Ghim S.-Y."/>
            <person name="Glaser P."/>
            <person name="Goffeau A."/>
            <person name="Golightly E.J."/>
            <person name="Grandi G."/>
            <person name="Guiseppi G."/>
            <person name="Guy B.J."/>
            <person name="Haga K."/>
            <person name="Haiech J."/>
            <person name="Harwood C.R."/>
            <person name="Henaut A."/>
            <person name="Hilbert H."/>
            <person name="Holsappel S."/>
            <person name="Hosono S."/>
            <person name="Hullo M.-F."/>
            <person name="Itaya M."/>
            <person name="Jones L.-M."/>
            <person name="Joris B."/>
            <person name="Karamata D."/>
            <person name="Kasahara Y."/>
            <person name="Klaerr-Blanchard M."/>
            <person name="Klein C."/>
            <person name="Kobayashi Y."/>
            <person name="Koetter P."/>
            <person name="Koningstein G."/>
            <person name="Krogh S."/>
            <person name="Kumano M."/>
            <person name="Kurita K."/>
            <person name="Lapidus A."/>
            <person name="Lardinois S."/>
            <person name="Lauber J."/>
            <person name="Lazarevic V."/>
            <person name="Lee S.-M."/>
            <person name="Levine A."/>
            <person name="Liu H."/>
            <person name="Masuda S."/>
            <person name="Mauel C."/>
            <person name="Medigue C."/>
            <person name="Medina N."/>
            <person name="Mellado R.P."/>
            <person name="Mizuno M."/>
            <person name="Moestl D."/>
            <person name="Nakai S."/>
            <person name="Noback M."/>
            <person name="Noone D."/>
            <person name="O'Reilly M."/>
            <person name="Ogawa K."/>
            <person name="Ogiwara A."/>
            <person name="Oudega B."/>
            <person name="Park S.-H."/>
            <person name="Parro V."/>
            <person name="Pohl T.M."/>
            <person name="Portetelle D."/>
            <person name="Porwollik S."/>
            <person name="Prescott A.M."/>
            <person name="Presecan E."/>
            <person name="Pujic P."/>
            <person name="Purnelle B."/>
            <person name="Rapoport G."/>
            <person name="Rey M."/>
            <person name="Reynolds S."/>
            <person name="Rieger M."/>
            <person name="Rivolta C."/>
            <person name="Rocha E."/>
            <person name="Roche B."/>
            <person name="Rose M."/>
            <person name="Sadaie Y."/>
            <person name="Sato T."/>
            <person name="Scanlan E."/>
            <person name="Schleich S."/>
            <person name="Schroeter R."/>
            <person name="Scoffone F."/>
            <person name="Sekiguchi J."/>
            <person name="Sekowska A."/>
            <person name="Seror S.J."/>
            <person name="Serror P."/>
            <person name="Shin B.-S."/>
            <person name="Soldo B."/>
            <person name="Sorokin A."/>
            <person name="Tacconi E."/>
            <person name="Takagi T."/>
            <person name="Takahashi H."/>
            <person name="Takemaru K."/>
            <person name="Takeuchi M."/>
            <person name="Tamakoshi A."/>
            <person name="Tanaka T."/>
            <person name="Terpstra P."/>
            <person name="Tognoni A."/>
            <person name="Tosato V."/>
            <person name="Uchiyama S."/>
            <person name="Vandenbol M."/>
            <person name="Vannier F."/>
            <person name="Vassarotti A."/>
            <person name="Viari A."/>
            <person name="Wambutt R."/>
            <person name="Wedler E."/>
            <person name="Wedler H."/>
            <person name="Weitzenegger T."/>
            <person name="Winters P."/>
            <person name="Wipat A."/>
            <person name="Yamamoto H."/>
            <person name="Yamane K."/>
            <person name="Yasumoto K."/>
            <person name="Yata K."/>
            <person name="Yoshida K."/>
            <person name="Yoshikawa H.-F."/>
            <person name="Zumstein E."/>
            <person name="Yoshikawa H."/>
            <person name="Danchin A."/>
        </authorList>
    </citation>
    <scope>NUCLEOTIDE SEQUENCE [LARGE SCALE GENOMIC DNA]</scope>
    <source>
        <strain>168</strain>
    </source>
</reference>
<reference key="3">
    <citation type="journal article" date="2009" name="Microbiology">
        <title>From a consortium sequence to a unified sequence: the Bacillus subtilis 168 reference genome a decade later.</title>
        <authorList>
            <person name="Barbe V."/>
            <person name="Cruveiller S."/>
            <person name="Kunst F."/>
            <person name="Lenoble P."/>
            <person name="Meurice G."/>
            <person name="Sekowska A."/>
            <person name="Vallenet D."/>
            <person name="Wang T."/>
            <person name="Moszer I."/>
            <person name="Medigue C."/>
            <person name="Danchin A."/>
        </authorList>
    </citation>
    <scope>SEQUENCE REVISION TO 58</scope>
</reference>
<comment type="similarity">
    <text evidence="2">Belongs to the N-acetylmuramoyl-L-alanine amidase 3 family.</text>
</comment>
<comment type="sequence caution" evidence="2">
    <conflict type="frameshift">
        <sequence resource="EMBL-CDS" id="BAA12584"/>
    </conflict>
</comment>
<comment type="sequence caution" evidence="2">
    <conflict type="frameshift">
        <sequence resource="EMBL-CDS" id="BAA12585"/>
    </conflict>
</comment>
<dbReference type="EMBL" id="D84432">
    <property type="protein sequence ID" value="BAA12584.1"/>
    <property type="status" value="ALT_FRAME"/>
    <property type="molecule type" value="Genomic_DNA"/>
</dbReference>
<dbReference type="EMBL" id="D84432">
    <property type="protein sequence ID" value="BAA12585.1"/>
    <property type="status" value="ALT_FRAME"/>
    <property type="molecule type" value="Genomic_DNA"/>
</dbReference>
<dbReference type="EMBL" id="AL009126">
    <property type="protein sequence ID" value="CAB14350.2"/>
    <property type="molecule type" value="Genomic_DNA"/>
</dbReference>
<dbReference type="PIR" id="E69961">
    <property type="entry name" value="E69961"/>
</dbReference>
<dbReference type="RefSeq" id="NP_390299.2">
    <property type="nucleotide sequence ID" value="NC_000964.3"/>
</dbReference>
<dbReference type="RefSeq" id="WP_010886565.1">
    <property type="nucleotide sequence ID" value="NZ_OZ025638.1"/>
</dbReference>
<dbReference type="SMR" id="P54525"/>
<dbReference type="FunCoup" id="P54525">
    <property type="interactions" value="176"/>
</dbReference>
<dbReference type="STRING" id="224308.BSU24190"/>
<dbReference type="PaxDb" id="224308-BSU24190"/>
<dbReference type="EnsemblBacteria" id="CAB14350">
    <property type="protein sequence ID" value="CAB14350"/>
    <property type="gene ID" value="BSU_24190"/>
</dbReference>
<dbReference type="GeneID" id="938657"/>
<dbReference type="KEGG" id="bsu:BSU24190"/>
<dbReference type="PATRIC" id="fig|224308.43.peg.2523"/>
<dbReference type="eggNOG" id="COG0860">
    <property type="taxonomic scope" value="Bacteria"/>
</dbReference>
<dbReference type="InParanoid" id="P54525"/>
<dbReference type="OrthoDB" id="9806267at2"/>
<dbReference type="PhylomeDB" id="P54525"/>
<dbReference type="BioCyc" id="BSUB:BSU24190-MONOMER"/>
<dbReference type="Proteomes" id="UP000001570">
    <property type="component" value="Chromosome"/>
</dbReference>
<dbReference type="GO" id="GO:0008745">
    <property type="term" value="F:N-acetylmuramoyl-L-alanine amidase activity"/>
    <property type="evidence" value="ECO:0007669"/>
    <property type="project" value="InterPro"/>
</dbReference>
<dbReference type="GO" id="GO:0009253">
    <property type="term" value="P:peptidoglycan catabolic process"/>
    <property type="evidence" value="ECO:0007669"/>
    <property type="project" value="InterPro"/>
</dbReference>
<dbReference type="CDD" id="cd02696">
    <property type="entry name" value="MurNAc-LAA"/>
    <property type="match status" value="1"/>
</dbReference>
<dbReference type="Gene3D" id="3.40.630.40">
    <property type="entry name" value="Zn-dependent exopeptidases"/>
    <property type="match status" value="1"/>
</dbReference>
<dbReference type="InterPro" id="IPR002508">
    <property type="entry name" value="MurNAc-LAA_cat"/>
</dbReference>
<dbReference type="InterPro" id="IPR050695">
    <property type="entry name" value="N-acetylmuramoyl_amidase_3"/>
</dbReference>
<dbReference type="PANTHER" id="PTHR30404">
    <property type="entry name" value="N-ACETYLMURAMOYL-L-ALANINE AMIDASE"/>
    <property type="match status" value="1"/>
</dbReference>
<dbReference type="PANTHER" id="PTHR30404:SF0">
    <property type="entry name" value="N-ACETYLMURAMOYL-L-ALANINE AMIDASE AMIC"/>
    <property type="match status" value="1"/>
</dbReference>
<dbReference type="Pfam" id="PF01520">
    <property type="entry name" value="Amidase_3"/>
    <property type="match status" value="1"/>
</dbReference>
<dbReference type="SMART" id="SM00646">
    <property type="entry name" value="Ami_3"/>
    <property type="match status" value="1"/>
</dbReference>
<dbReference type="SUPFAM" id="SSF53187">
    <property type="entry name" value="Zn-dependent exopeptidases"/>
    <property type="match status" value="1"/>
</dbReference>
<evidence type="ECO:0000255" key="1"/>
<evidence type="ECO:0000305" key="2"/>
<sequence length="206" mass="22209">MRMLWRSLALCGLALTLAPCAQAAEPIEGKTVYIDAGHGGEDSGAVGNGLFEKDINLAVSEHVTDKLKEEGANPVASRSDDHFLTLEERVAKASANQADLFVSIHVNSGVASASGTETYFQSDYEGENSRRLASDIQSQLVSSLQTRDRGVKESDFYVITYSQMPSVLAELGFITNSSDADKLGSEEYQQKAADAIVNGIDSYYDQ</sequence>
<feature type="chain" id="PRO_0000164424" description="Uncharacterized protein YqiI">
    <location>
        <begin position="1"/>
        <end position="206"/>
    </location>
</feature>
<feature type="domain" description="MurNAc-LAA" evidence="1">
    <location>
        <begin position="32"/>
        <end position="201"/>
    </location>
</feature>
<feature type="sequence conflict" description="In Ref. 1; BAA12585." evidence="2" ref="1">
    <original>A</original>
    <variation>P</variation>
    <location>
        <position position="58"/>
    </location>
</feature>
<feature type="sequence conflict" description="In Ref. 1; BAA12585." evidence="2" ref="1">
    <original>E</original>
    <variation>D</variation>
    <location>
        <position position="170"/>
    </location>
</feature>
<gene>
    <name type="primary">yqiI</name>
    <name type="ordered locus">BSU24190</name>
</gene>
<protein>
    <recommendedName>
        <fullName>Uncharacterized protein YqiI</fullName>
    </recommendedName>
</protein>
<accession>P54525</accession>
<accession>O32017</accession>
<accession>P54526</accession>
<keyword id="KW-0378">Hydrolase</keyword>
<keyword id="KW-1185">Reference proteome</keyword>
<name>YQII_BACSU</name>